<feature type="chain" id="PRO_1000206355" description="Ubiquinone biosynthesis O-methyltransferase">
    <location>
        <begin position="1"/>
        <end position="240"/>
    </location>
</feature>
<feature type="binding site" evidence="1">
    <location>
        <position position="44"/>
    </location>
    <ligand>
        <name>S-adenosyl-L-methionine</name>
        <dbReference type="ChEBI" id="CHEBI:59789"/>
    </ligand>
</feature>
<feature type="binding site" evidence="1">
    <location>
        <position position="64"/>
    </location>
    <ligand>
        <name>S-adenosyl-L-methionine</name>
        <dbReference type="ChEBI" id="CHEBI:59789"/>
    </ligand>
</feature>
<feature type="binding site" evidence="1">
    <location>
        <position position="85"/>
    </location>
    <ligand>
        <name>S-adenosyl-L-methionine</name>
        <dbReference type="ChEBI" id="CHEBI:59789"/>
    </ligand>
</feature>
<feature type="binding site" evidence="1">
    <location>
        <position position="129"/>
    </location>
    <ligand>
        <name>S-adenosyl-L-methionine</name>
        <dbReference type="ChEBI" id="CHEBI:59789"/>
    </ligand>
</feature>
<gene>
    <name evidence="1" type="primary">ubiG</name>
    <name type="ordered locus">BWG_2004</name>
</gene>
<sequence>MNAEKSPVNHNVDHEEIAKFEAVASRWWDLEGEFKPLHRINPLRLGYIAERAGGLFGKKVLDVGCGGGILAESMAREGATVTGLDMGFEPLQVAKLHALESGIQVDYVQETVEEHAAKHAGQYDVVTCMEMLEHVPDPQSVVRACAQLVKPGGDVFFSTLNRNGKSWLMAVVGAEYILRMVPKGTHDVKKFIKPAELLGWVDQTSLKERHITGLHYNPITNTFKLGPGVDVNYMLHTQNK</sequence>
<comment type="function">
    <text evidence="1">O-methyltransferase that catalyzes the 2 O-methylation steps in the ubiquinone biosynthetic pathway.</text>
</comment>
<comment type="catalytic activity">
    <reaction evidence="1">
        <text>a 3-demethylubiquinol + S-adenosyl-L-methionine = a ubiquinol + S-adenosyl-L-homocysteine + H(+)</text>
        <dbReference type="Rhea" id="RHEA:44380"/>
        <dbReference type="Rhea" id="RHEA-COMP:9566"/>
        <dbReference type="Rhea" id="RHEA-COMP:10914"/>
        <dbReference type="ChEBI" id="CHEBI:15378"/>
        <dbReference type="ChEBI" id="CHEBI:17976"/>
        <dbReference type="ChEBI" id="CHEBI:57856"/>
        <dbReference type="ChEBI" id="CHEBI:59789"/>
        <dbReference type="ChEBI" id="CHEBI:84422"/>
        <dbReference type="EC" id="2.1.1.64"/>
    </reaction>
</comment>
<comment type="catalytic activity">
    <reaction evidence="1">
        <text>a 3-(all-trans-polyprenyl)benzene-1,2-diol + S-adenosyl-L-methionine = a 2-methoxy-6-(all-trans-polyprenyl)phenol + S-adenosyl-L-homocysteine + H(+)</text>
        <dbReference type="Rhea" id="RHEA:31411"/>
        <dbReference type="Rhea" id="RHEA-COMP:9550"/>
        <dbReference type="Rhea" id="RHEA-COMP:9551"/>
        <dbReference type="ChEBI" id="CHEBI:15378"/>
        <dbReference type="ChEBI" id="CHEBI:57856"/>
        <dbReference type="ChEBI" id="CHEBI:59789"/>
        <dbReference type="ChEBI" id="CHEBI:62729"/>
        <dbReference type="ChEBI" id="CHEBI:62731"/>
        <dbReference type="EC" id="2.1.1.222"/>
    </reaction>
</comment>
<comment type="pathway">
    <text evidence="1">Cofactor biosynthesis; ubiquinone biosynthesis.</text>
</comment>
<comment type="similarity">
    <text evidence="1">Belongs to the methyltransferase superfamily. UbiG/COQ3 family.</text>
</comment>
<organism>
    <name type="scientific">Escherichia coli (strain K12 / MC4100 / BW2952)</name>
    <dbReference type="NCBI Taxonomy" id="595496"/>
    <lineage>
        <taxon>Bacteria</taxon>
        <taxon>Pseudomonadati</taxon>
        <taxon>Pseudomonadota</taxon>
        <taxon>Gammaproteobacteria</taxon>
        <taxon>Enterobacterales</taxon>
        <taxon>Enterobacteriaceae</taxon>
        <taxon>Escherichia</taxon>
    </lineage>
</organism>
<dbReference type="EC" id="2.1.1.222" evidence="1"/>
<dbReference type="EC" id="2.1.1.64" evidence="1"/>
<dbReference type="EMBL" id="CP001396">
    <property type="protein sequence ID" value="ACR62067.1"/>
    <property type="molecule type" value="Genomic_DNA"/>
</dbReference>
<dbReference type="RefSeq" id="WP_000990765.1">
    <property type="nucleotide sequence ID" value="NC_012759.1"/>
</dbReference>
<dbReference type="SMR" id="C4ZU73"/>
<dbReference type="GeneID" id="75206477"/>
<dbReference type="KEGG" id="ebw:BWG_2004"/>
<dbReference type="HOGENOM" id="CLU_042432_5_0_6"/>
<dbReference type="UniPathway" id="UPA00232"/>
<dbReference type="GO" id="GO:0102208">
    <property type="term" value="F:2-polyprenyl-6-hydroxyphenol methylase activity"/>
    <property type="evidence" value="ECO:0007669"/>
    <property type="project" value="UniProtKB-EC"/>
</dbReference>
<dbReference type="GO" id="GO:0061542">
    <property type="term" value="F:3-demethylubiquinol 3-O-methyltransferase activity"/>
    <property type="evidence" value="ECO:0007669"/>
    <property type="project" value="UniProtKB-UniRule"/>
</dbReference>
<dbReference type="GO" id="GO:0010420">
    <property type="term" value="F:polyprenyldihydroxybenzoate methyltransferase activity"/>
    <property type="evidence" value="ECO:0007669"/>
    <property type="project" value="InterPro"/>
</dbReference>
<dbReference type="GO" id="GO:0032259">
    <property type="term" value="P:methylation"/>
    <property type="evidence" value="ECO:0007669"/>
    <property type="project" value="UniProtKB-KW"/>
</dbReference>
<dbReference type="CDD" id="cd02440">
    <property type="entry name" value="AdoMet_MTases"/>
    <property type="match status" value="1"/>
</dbReference>
<dbReference type="FunFam" id="3.40.50.150:FF:000028">
    <property type="entry name" value="Ubiquinone biosynthesis O-methyltransferase"/>
    <property type="match status" value="1"/>
</dbReference>
<dbReference type="Gene3D" id="3.40.50.150">
    <property type="entry name" value="Vaccinia Virus protein VP39"/>
    <property type="match status" value="1"/>
</dbReference>
<dbReference type="HAMAP" id="MF_00472">
    <property type="entry name" value="UbiG"/>
    <property type="match status" value="1"/>
</dbReference>
<dbReference type="InterPro" id="IPR029063">
    <property type="entry name" value="SAM-dependent_MTases_sf"/>
</dbReference>
<dbReference type="InterPro" id="IPR010233">
    <property type="entry name" value="UbiG_MeTrfase"/>
</dbReference>
<dbReference type="NCBIfam" id="TIGR01983">
    <property type="entry name" value="UbiG"/>
    <property type="match status" value="1"/>
</dbReference>
<dbReference type="PANTHER" id="PTHR43464">
    <property type="entry name" value="METHYLTRANSFERASE"/>
    <property type="match status" value="1"/>
</dbReference>
<dbReference type="PANTHER" id="PTHR43464:SF19">
    <property type="entry name" value="UBIQUINONE BIOSYNTHESIS O-METHYLTRANSFERASE, MITOCHONDRIAL"/>
    <property type="match status" value="1"/>
</dbReference>
<dbReference type="Pfam" id="PF13489">
    <property type="entry name" value="Methyltransf_23"/>
    <property type="match status" value="1"/>
</dbReference>
<dbReference type="SUPFAM" id="SSF53335">
    <property type="entry name" value="S-adenosyl-L-methionine-dependent methyltransferases"/>
    <property type="match status" value="1"/>
</dbReference>
<reference key="1">
    <citation type="journal article" date="2009" name="J. Bacteriol.">
        <title>Genomic sequencing reveals regulatory mutations and recombinational events in the widely used MC4100 lineage of Escherichia coli K-12.</title>
        <authorList>
            <person name="Ferenci T."/>
            <person name="Zhou Z."/>
            <person name="Betteridge T."/>
            <person name="Ren Y."/>
            <person name="Liu Y."/>
            <person name="Feng L."/>
            <person name="Reeves P.R."/>
            <person name="Wang L."/>
        </authorList>
    </citation>
    <scope>NUCLEOTIDE SEQUENCE [LARGE SCALE GENOMIC DNA]</scope>
    <source>
        <strain>K12 / MC4100 / BW2952</strain>
    </source>
</reference>
<evidence type="ECO:0000255" key="1">
    <source>
        <dbReference type="HAMAP-Rule" id="MF_00472"/>
    </source>
</evidence>
<protein>
    <recommendedName>
        <fullName evidence="1">Ubiquinone biosynthesis O-methyltransferase</fullName>
    </recommendedName>
    <alternativeName>
        <fullName evidence="1">2-octaprenyl-6-hydroxyphenol methylase</fullName>
        <ecNumber evidence="1">2.1.1.222</ecNumber>
    </alternativeName>
    <alternativeName>
        <fullName evidence="1">3-demethylubiquinone-8 3-O-methyltransferase</fullName>
        <ecNumber evidence="1">2.1.1.64</ecNumber>
    </alternativeName>
</protein>
<keyword id="KW-0489">Methyltransferase</keyword>
<keyword id="KW-0949">S-adenosyl-L-methionine</keyword>
<keyword id="KW-0808">Transferase</keyword>
<keyword id="KW-0831">Ubiquinone biosynthesis</keyword>
<name>UBIG_ECOBW</name>
<proteinExistence type="inferred from homology"/>
<accession>C4ZU73</accession>